<evidence type="ECO:0000250" key="1"/>
<evidence type="ECO:0000269" key="2">
    <source>
    </source>
</evidence>
<evidence type="ECO:0000305" key="3"/>
<comment type="function">
    <text evidence="2">Catalyzes the NAD-dependent oxidation of L-arabinitol to L-xylulose in the fungal L-arabinose catabolic pathway. L-arabinose catabolism is important for using plant material as a carbon source. NADP cannot act as a cosubstrate.</text>
</comment>
<comment type="catalytic activity">
    <reaction evidence="2">
        <text>L-arabinitol + NAD(+) = L-xylulose + NADH + H(+)</text>
        <dbReference type="Rhea" id="RHEA:16381"/>
        <dbReference type="ChEBI" id="CHEBI:15378"/>
        <dbReference type="ChEBI" id="CHEBI:17399"/>
        <dbReference type="ChEBI" id="CHEBI:18403"/>
        <dbReference type="ChEBI" id="CHEBI:57540"/>
        <dbReference type="ChEBI" id="CHEBI:57945"/>
        <dbReference type="EC" id="1.1.1.12"/>
    </reaction>
</comment>
<comment type="cofactor">
    <cofactor evidence="1">
        <name>Zn(2+)</name>
        <dbReference type="ChEBI" id="CHEBI:29105"/>
    </cofactor>
    <text evidence="1">Binds 2 Zn(2+) ions per subunit.</text>
</comment>
<comment type="biophysicochemical properties">
    <kinetics>
        <KM evidence="2">13.4 mM for L-arabinitol</KM>
        <KM evidence="2">23.3 mM for D-xylitol</KM>
        <KM evidence="2">483.5 mM for D-sorbitol</KM>
        <KM evidence="2">60 uM for NAD</KM>
    </kinetics>
    <phDependence>
        <text evidence="2">Optimum pH is 9. Active from pH 7 to pH 11.</text>
    </phDependence>
</comment>
<comment type="pathway">
    <text>Carbohydrate degradation; L-arabinose degradation via L-arabinitol; D-xylulose 5-phosphate from L-arabinose (fungal route): step 2/5.</text>
</comment>
<comment type="subunit">
    <text evidence="1">Homotetramer.</text>
</comment>
<comment type="induction">
    <text evidence="2">Induced by L-arabinose, D-xylose, xylitol, L-arabinitol, and galactitol.</text>
</comment>
<comment type="similarity">
    <text evidence="3">Belongs to the zinc-containing alcohol dehydrogenase family.</text>
</comment>
<dbReference type="EC" id="1.1.1.12"/>
<dbReference type="EMBL" id="FJ985742">
    <property type="protein sequence ID" value="ACR78270.1"/>
    <property type="molecule type" value="Genomic_DNA"/>
</dbReference>
<dbReference type="SMR" id="C5J3R8"/>
<dbReference type="BRENDA" id="1.1.1.12">
    <property type="organism ID" value="6211"/>
</dbReference>
<dbReference type="UniPathway" id="UPA00146">
    <property type="reaction ID" value="UER00575"/>
</dbReference>
<dbReference type="GO" id="GO:0050019">
    <property type="term" value="F:L-arabinitol 4-dehydrogenase activity"/>
    <property type="evidence" value="ECO:0007669"/>
    <property type="project" value="UniProtKB-EC"/>
</dbReference>
<dbReference type="GO" id="GO:0003939">
    <property type="term" value="F:L-iditol 2-dehydrogenase (NAD+) activity"/>
    <property type="evidence" value="ECO:0007669"/>
    <property type="project" value="TreeGrafter"/>
</dbReference>
<dbReference type="GO" id="GO:0000166">
    <property type="term" value="F:nucleotide binding"/>
    <property type="evidence" value="ECO:0007669"/>
    <property type="project" value="UniProtKB-KW"/>
</dbReference>
<dbReference type="GO" id="GO:0008270">
    <property type="term" value="F:zinc ion binding"/>
    <property type="evidence" value="ECO:0007669"/>
    <property type="project" value="InterPro"/>
</dbReference>
<dbReference type="GO" id="GO:0019569">
    <property type="term" value="P:L-arabinose catabolic process to xylulose 5-phosphate"/>
    <property type="evidence" value="ECO:0007669"/>
    <property type="project" value="UniProtKB-UniPathway"/>
</dbReference>
<dbReference type="GO" id="GO:0006062">
    <property type="term" value="P:sorbitol catabolic process"/>
    <property type="evidence" value="ECO:0007669"/>
    <property type="project" value="TreeGrafter"/>
</dbReference>
<dbReference type="CDD" id="cd05285">
    <property type="entry name" value="sorbitol_DH"/>
    <property type="match status" value="1"/>
</dbReference>
<dbReference type="FunFam" id="3.40.50.720:FF:000068">
    <property type="entry name" value="Sorbitol dehydrogenase"/>
    <property type="match status" value="1"/>
</dbReference>
<dbReference type="Gene3D" id="3.90.180.10">
    <property type="entry name" value="Medium-chain alcohol dehydrogenases, catalytic domain"/>
    <property type="match status" value="1"/>
</dbReference>
<dbReference type="Gene3D" id="3.40.50.720">
    <property type="entry name" value="NAD(P)-binding Rossmann-like Domain"/>
    <property type="match status" value="1"/>
</dbReference>
<dbReference type="InterPro" id="IPR013149">
    <property type="entry name" value="ADH-like_C"/>
</dbReference>
<dbReference type="InterPro" id="IPR013154">
    <property type="entry name" value="ADH-like_N"/>
</dbReference>
<dbReference type="InterPro" id="IPR002328">
    <property type="entry name" value="ADH_Zn_CS"/>
</dbReference>
<dbReference type="InterPro" id="IPR011032">
    <property type="entry name" value="GroES-like_sf"/>
</dbReference>
<dbReference type="InterPro" id="IPR036291">
    <property type="entry name" value="NAD(P)-bd_dom_sf"/>
</dbReference>
<dbReference type="InterPro" id="IPR020843">
    <property type="entry name" value="PKS_ER"/>
</dbReference>
<dbReference type="InterPro" id="IPR045306">
    <property type="entry name" value="SDH-like"/>
</dbReference>
<dbReference type="PANTHER" id="PTHR43161:SF12">
    <property type="entry name" value="L-ARABINITOL 4-DEHYDROGENASE"/>
    <property type="match status" value="1"/>
</dbReference>
<dbReference type="PANTHER" id="PTHR43161">
    <property type="entry name" value="SORBITOL DEHYDROGENASE"/>
    <property type="match status" value="1"/>
</dbReference>
<dbReference type="Pfam" id="PF08240">
    <property type="entry name" value="ADH_N"/>
    <property type="match status" value="1"/>
</dbReference>
<dbReference type="Pfam" id="PF00107">
    <property type="entry name" value="ADH_zinc_N"/>
    <property type="match status" value="1"/>
</dbReference>
<dbReference type="SMART" id="SM00829">
    <property type="entry name" value="PKS_ER"/>
    <property type="match status" value="1"/>
</dbReference>
<dbReference type="SUPFAM" id="SSF50129">
    <property type="entry name" value="GroES-like"/>
    <property type="match status" value="1"/>
</dbReference>
<dbReference type="SUPFAM" id="SSF51735">
    <property type="entry name" value="NAD(P)-binding Rossmann-fold domains"/>
    <property type="match status" value="1"/>
</dbReference>
<dbReference type="PROSITE" id="PS00059">
    <property type="entry name" value="ADH_ZINC"/>
    <property type="match status" value="1"/>
</dbReference>
<organism>
    <name type="scientific">Talaromyces emersonii</name>
    <name type="common">Thermophilic fungus</name>
    <name type="synonym">Rasamsonia emersonii</name>
    <dbReference type="NCBI Taxonomy" id="68825"/>
    <lineage>
        <taxon>Eukaryota</taxon>
        <taxon>Fungi</taxon>
        <taxon>Dikarya</taxon>
        <taxon>Ascomycota</taxon>
        <taxon>Pezizomycotina</taxon>
        <taxon>Eurotiomycetes</taxon>
        <taxon>Eurotiomycetidae</taxon>
        <taxon>Eurotiales</taxon>
        <taxon>Trichocomaceae</taxon>
        <taxon>Rasamsonia</taxon>
    </lineage>
</organism>
<reference key="1">
    <citation type="journal article" date="2010" name="Biochem. Genet.">
        <title>Cloning, heterologous expression, and characterization of the xylitol and L-arabitol dehydrogenase genes, Texdh and Telad, from the thermophilic fungus Talaromyces emersonii.</title>
        <authorList>
            <person name="Fernandes S."/>
            <person name="Tuohy M.G."/>
            <person name="Murray P.G."/>
        </authorList>
    </citation>
    <scope>NUCLEOTIDE SEQUENCE [GENOMIC DNA]</scope>
    <scope>FUNCTION</scope>
    <scope>CATALYTIC ACTIVITY</scope>
    <scope>BIOPHYSICOCHEMICAL PROPERTIES</scope>
    <scope>INDUCTION</scope>
</reference>
<protein>
    <recommendedName>
        <fullName>L-arabinitol 4-dehydrogenase</fullName>
        <shortName>LAD</shortName>
        <ecNumber>1.1.1.12</ecNumber>
    </recommendedName>
</protein>
<feature type="chain" id="PRO_0000418408" description="L-arabinitol 4-dehydrogenase">
    <location>
        <begin position="1"/>
        <end position="388"/>
    </location>
</feature>
<feature type="binding site" evidence="1">
    <location>
        <position position="55"/>
    </location>
    <ligand>
        <name>Zn(2+)</name>
        <dbReference type="ChEBI" id="CHEBI:29105"/>
        <label>1</label>
        <note>catalytic</note>
    </ligand>
</feature>
<feature type="binding site" evidence="1">
    <location>
        <position position="80"/>
    </location>
    <ligand>
        <name>Zn(2+)</name>
        <dbReference type="ChEBI" id="CHEBI:29105"/>
        <label>1</label>
        <note>catalytic</note>
    </ligand>
</feature>
<feature type="binding site" evidence="1">
    <location>
        <position position="81"/>
    </location>
    <ligand>
        <name>Zn(2+)</name>
        <dbReference type="ChEBI" id="CHEBI:29105"/>
        <label>1</label>
        <note>catalytic</note>
    </ligand>
</feature>
<feature type="binding site" evidence="1">
    <location>
        <position position="110"/>
    </location>
    <ligand>
        <name>Zn(2+)</name>
        <dbReference type="ChEBI" id="CHEBI:29105"/>
        <label>2</label>
        <note>structural</note>
    </ligand>
</feature>
<feature type="binding site" evidence="1">
    <location>
        <position position="113"/>
    </location>
    <ligand>
        <name>Zn(2+)</name>
        <dbReference type="ChEBI" id="CHEBI:29105"/>
        <label>2</label>
        <note>structural</note>
    </ligand>
</feature>
<feature type="binding site" evidence="1">
    <location>
        <position position="116"/>
    </location>
    <ligand>
        <name>Zn(2+)</name>
        <dbReference type="ChEBI" id="CHEBI:29105"/>
        <label>2</label>
        <note>structural</note>
    </ligand>
</feature>
<feature type="binding site" evidence="1">
    <location>
        <position position="124"/>
    </location>
    <ligand>
        <name>Zn(2+)</name>
        <dbReference type="ChEBI" id="CHEBI:29105"/>
        <label>2</label>
        <note>structural</note>
    </ligand>
</feature>
<feature type="binding site" evidence="1">
    <location>
        <position position="165"/>
    </location>
    <ligand>
        <name>Zn(2+)</name>
        <dbReference type="ChEBI" id="CHEBI:29105"/>
        <label>1</label>
        <note>catalytic</note>
    </ligand>
</feature>
<feature type="binding site" evidence="1">
    <location>
        <begin position="192"/>
        <end position="193"/>
    </location>
    <ligand>
        <name>NAD(+)</name>
        <dbReference type="ChEBI" id="CHEBI:57540"/>
    </ligand>
</feature>
<feature type="binding site" evidence="1">
    <location>
        <position position="213"/>
    </location>
    <ligand>
        <name>NAD(+)</name>
        <dbReference type="ChEBI" id="CHEBI:57540"/>
    </ligand>
</feature>
<feature type="binding site" evidence="1">
    <location>
        <position position="218"/>
    </location>
    <ligand>
        <name>NAD(+)</name>
        <dbReference type="ChEBI" id="CHEBI:57540"/>
    </ligand>
</feature>
<feature type="binding site" evidence="1">
    <location>
        <position position="293"/>
    </location>
    <ligand>
        <name>NAD(+)</name>
        <dbReference type="ChEBI" id="CHEBI:57540"/>
    </ligand>
</feature>
<feature type="binding site" evidence="1">
    <location>
        <begin position="317"/>
        <end position="319"/>
    </location>
    <ligand>
        <name>NAD(+)</name>
        <dbReference type="ChEBI" id="CHEBI:57540"/>
    </ligand>
</feature>
<gene>
    <name type="primary">lad</name>
</gene>
<proteinExistence type="evidence at protein level"/>
<keyword id="KW-0054">Arabinose catabolism</keyword>
<keyword id="KW-0119">Carbohydrate metabolism</keyword>
<keyword id="KW-0479">Metal-binding</keyword>
<keyword id="KW-0520">NAD</keyword>
<keyword id="KW-0547">Nucleotide-binding</keyword>
<keyword id="KW-0560">Oxidoreductase</keyword>
<keyword id="KW-0862">Zinc</keyword>
<sequence length="388" mass="41389">MAAGISLTKPNIGVYTNPNHDLWVADAKPTLEEVKSGSDLKPGQVTVEIRSTGICGSDVHFWHAGCIGPMIVTGDHILGHESAGVVIAVAPDVKTLKPGDRVAIEPNIICNKCEPCLTGRYNGCEAVEFLSTPPVDGLLRRYVNHPAIWCHKIGDMSFEDGALLEPLSVALAGMDRAGVRLGDPVLVAGAGPIGLVTLLCVRAAGATPIVITDIDEGRLRFAKELVPEVRTYRVQTGLSAEENAAGILDALNDGNGSAPDAIRPRVAMECTGVESSVASAIWSVKFGGKVFVIGVGKNEMKVPFMRLSTWEIDLQYQYRYCNTWPKAIRLVKNGVINLKKLVTHRFPLEDAVKAFETAANPKTGAIKVQIMSSEEDIKAASGVNGASN</sequence>
<name>LAD_TALEM</name>
<accession>C5J3R8</accession>